<dbReference type="EC" id="1.13.11.2"/>
<dbReference type="EMBL" id="M33263">
    <property type="protein sequence ID" value="AAA27512.1"/>
    <property type="molecule type" value="Genomic_DNA"/>
</dbReference>
<dbReference type="EMBL" id="X52805">
    <property type="protein sequence ID" value="CAA36991.1"/>
    <property type="molecule type" value="Genomic_DNA"/>
</dbReference>
<dbReference type="PIR" id="JQ0182">
    <property type="entry name" value="JQ0182"/>
</dbReference>
<dbReference type="SMR" id="P17262"/>
<dbReference type="UniPathway" id="UPA00156"/>
<dbReference type="GO" id="GO:0018577">
    <property type="term" value="F:catechol 2,3-dioxygenase activity"/>
    <property type="evidence" value="ECO:0007669"/>
    <property type="project" value="UniProtKB-EC"/>
</dbReference>
<dbReference type="GO" id="GO:0008198">
    <property type="term" value="F:ferrous iron binding"/>
    <property type="evidence" value="ECO:0007669"/>
    <property type="project" value="InterPro"/>
</dbReference>
<dbReference type="GO" id="GO:0043640">
    <property type="term" value="P:benzoate catabolic process via hydroxylation"/>
    <property type="evidence" value="ECO:0007669"/>
    <property type="project" value="UniProtKB-UniPathway"/>
</dbReference>
<dbReference type="CDD" id="cd07243">
    <property type="entry name" value="2_3_CTD_C"/>
    <property type="match status" value="1"/>
</dbReference>
<dbReference type="CDD" id="cd07265">
    <property type="entry name" value="2_3_CTD_N"/>
    <property type="match status" value="1"/>
</dbReference>
<dbReference type="Gene3D" id="3.10.180.10">
    <property type="entry name" value="2,3-Dihydroxybiphenyl 1,2-Dioxygenase, domain 1"/>
    <property type="match status" value="2"/>
</dbReference>
<dbReference type="InterPro" id="IPR017624">
    <property type="entry name" value="Catechol_2-3_dOase"/>
</dbReference>
<dbReference type="InterPro" id="IPR029068">
    <property type="entry name" value="Glyas_Bleomycin-R_OHBP_Dase"/>
</dbReference>
<dbReference type="InterPro" id="IPR004360">
    <property type="entry name" value="Glyas_Fos-R_dOase_dom"/>
</dbReference>
<dbReference type="InterPro" id="IPR037523">
    <property type="entry name" value="VOC"/>
</dbReference>
<dbReference type="InterPro" id="IPR000486">
    <property type="entry name" value="Xdiol_ring_cleave_dOase_1/2"/>
</dbReference>
<dbReference type="InterPro" id="IPR054560">
    <property type="entry name" value="XylE-like_N"/>
</dbReference>
<dbReference type="NCBIfam" id="TIGR03211">
    <property type="entry name" value="catechol_2_3"/>
    <property type="match status" value="1"/>
</dbReference>
<dbReference type="Pfam" id="PF22247">
    <property type="entry name" value="Diox-like_N"/>
    <property type="match status" value="1"/>
</dbReference>
<dbReference type="Pfam" id="PF00903">
    <property type="entry name" value="Glyoxalase"/>
    <property type="match status" value="1"/>
</dbReference>
<dbReference type="SUPFAM" id="SSF54593">
    <property type="entry name" value="Glyoxalase/Bleomycin resistance protein/Dihydroxybiphenyl dioxygenase"/>
    <property type="match status" value="1"/>
</dbReference>
<dbReference type="PROSITE" id="PS00082">
    <property type="entry name" value="EXTRADIOL_DIOXYGENAS"/>
    <property type="match status" value="1"/>
</dbReference>
<dbReference type="PROSITE" id="PS51819">
    <property type="entry name" value="VOC"/>
    <property type="match status" value="2"/>
</dbReference>
<accession>P17262</accession>
<feature type="chain" id="PRO_0000085029" description="Metapyrocatechase">
    <location>
        <begin position="1"/>
        <end position="307"/>
    </location>
</feature>
<feature type="domain" description="VOC 1" evidence="2">
    <location>
        <begin position="7"/>
        <end position="122"/>
    </location>
</feature>
<feature type="domain" description="VOC 2" evidence="2">
    <location>
        <begin position="150"/>
        <end position="269"/>
    </location>
</feature>
<feature type="binding site" evidence="1">
    <location>
        <position position="153"/>
    </location>
    <ligand>
        <name>Fe cation</name>
        <dbReference type="ChEBI" id="CHEBI:24875"/>
    </ligand>
</feature>
<feature type="binding site" evidence="1">
    <location>
        <position position="214"/>
    </location>
    <ligand>
        <name>Fe cation</name>
        <dbReference type="ChEBI" id="CHEBI:24875"/>
    </ligand>
</feature>
<feature type="binding site" evidence="1">
    <location>
        <position position="265"/>
    </location>
    <ligand>
        <name>Fe cation</name>
        <dbReference type="ChEBI" id="CHEBI:24875"/>
    </ligand>
</feature>
<proteinExistence type="inferred from homology"/>
<sequence length="307" mass="35255">MKKGVMRPGHVQLRVLNLESALAHYRDLLGLIEMDRDEQGRVYLKAWTEVDKFSVVLREADQPGMDFMGFKVIDEDCLNRLTQDLLNYGCLIETIPAGELKGCGRRVRFQTPSGHFFELYADKEYTGKWGLEEINPEAWPRNLKGMRAVRFDHCLLYGDELQATYALFTEVLGFYLAEQVIDDDGTRVAQFLSLSTKAHDVAFIHCPEKGKFHHVSFFLETWEDVLRAADLISMTDTSIDIGPTRHGLTHGKTIYFFDPSGNRNEVFCGGDYNYQDHKPVTWLAKDLGKAIFYHDRVLNERFLTVLT</sequence>
<protein>
    <recommendedName>
        <fullName>Metapyrocatechase</fullName>
        <shortName>MPC</shortName>
        <ecNumber>1.13.11.2</ecNumber>
    </recommendedName>
    <alternativeName>
        <fullName>CatO2ase</fullName>
    </alternativeName>
    <alternativeName>
        <fullName>Catechol 2,3-dioxygenase</fullName>
        <shortName>C23O</shortName>
    </alternativeName>
</protein>
<comment type="catalytic activity">
    <reaction>
        <text>catechol + O2 = (2Z,4E)-2-hydroxy-6-oxohexa-2,4-dienoate + H(+)</text>
        <dbReference type="Rhea" id="RHEA:17337"/>
        <dbReference type="ChEBI" id="CHEBI:15378"/>
        <dbReference type="ChEBI" id="CHEBI:15379"/>
        <dbReference type="ChEBI" id="CHEBI:18135"/>
        <dbReference type="ChEBI" id="CHEBI:71198"/>
        <dbReference type="EC" id="1.13.11.2"/>
    </reaction>
</comment>
<comment type="cofactor">
    <cofactor>
        <name>Fe(2+)</name>
        <dbReference type="ChEBI" id="CHEBI:29033"/>
    </cofactor>
</comment>
<comment type="pathway">
    <text>Aromatic compound metabolism; benzoate degradation via hydroxylation.</text>
</comment>
<comment type="subunit">
    <text>Homotetramer.</text>
</comment>
<comment type="similarity">
    <text evidence="3">Belongs to the extradiol ring-cleavage dioxygenase family.</text>
</comment>
<organism>
    <name type="scientific">Pseudomonas sp. (strain CF600)</name>
    <dbReference type="NCBI Taxonomy" id="79676"/>
    <lineage>
        <taxon>Bacteria</taxon>
        <taxon>Pseudomonadati</taxon>
        <taxon>Pseudomonadota</taxon>
    </lineage>
</organism>
<evidence type="ECO:0000250" key="1"/>
<evidence type="ECO:0000255" key="2">
    <source>
        <dbReference type="PROSITE-ProRule" id="PRU01163"/>
    </source>
</evidence>
<evidence type="ECO:0000305" key="3"/>
<name>DMPB_PSEUF</name>
<reference key="1">
    <citation type="journal article" date="1989" name="Gene">
        <title>Nucleotide sequence and expression of the catechol 2,3-dioxygenase-encoding gene of phenol-catabolizing Pseudomonas CF600.</title>
        <authorList>
            <person name="Bartilson M."/>
            <person name="Shingler V."/>
        </authorList>
    </citation>
    <scope>NUCLEOTIDE SEQUENCE [GENOMIC DNA]</scope>
</reference>
<reference key="2">
    <citation type="journal article" date="1990" name="Biochim. Biophys. Acta">
        <title>Nucleotide sequences of the meta-cleavage pathway enzymes 2-hydroxymuconic semialdehyde dehydrogenase and 2-hydroxymuconic semialdehyde hydrolase from Pseudomonas CF600.</title>
        <authorList>
            <person name="Nordlund I."/>
            <person name="Shingler V."/>
        </authorList>
    </citation>
    <scope>NUCLEOTIDE SEQUENCE [GENOMIC DNA] OF 287-307</scope>
</reference>
<gene>
    <name type="primary">dmpB</name>
</gene>
<geneLocation type="plasmid">
    <name>pVI150</name>
</geneLocation>
<keyword id="KW-0058">Aromatic hydrocarbons catabolism</keyword>
<keyword id="KW-0223">Dioxygenase</keyword>
<keyword id="KW-0408">Iron</keyword>
<keyword id="KW-0479">Metal-binding</keyword>
<keyword id="KW-0560">Oxidoreductase</keyword>
<keyword id="KW-0614">Plasmid</keyword>
<keyword id="KW-0677">Repeat</keyword>